<accession>Q3U9F6</accession>
<proteinExistence type="evidence at transcript level"/>
<dbReference type="EC" id="2.3.2.27"/>
<dbReference type="EMBL" id="AK151813">
    <property type="protein sequence ID" value="BAE30711.1"/>
    <property type="molecule type" value="mRNA"/>
</dbReference>
<dbReference type="CCDS" id="CCDS22740.1"/>
<dbReference type="RefSeq" id="NP_001028314.1">
    <property type="nucleotide sequence ID" value="NM_001033142.3"/>
</dbReference>
<dbReference type="SMR" id="Q3U9F6"/>
<dbReference type="BioGRID" id="213009">
    <property type="interactions" value="8"/>
</dbReference>
<dbReference type="FunCoup" id="Q3U9F6">
    <property type="interactions" value="831"/>
</dbReference>
<dbReference type="STRING" id="10090.ENSMUSP00000014614"/>
<dbReference type="iPTMnet" id="Q3U9F6"/>
<dbReference type="PhosphoSitePlus" id="Q3U9F6"/>
<dbReference type="PaxDb" id="10090-ENSMUSP00000014614"/>
<dbReference type="ProteomicsDB" id="300416"/>
<dbReference type="Pumba" id="Q3U9F6"/>
<dbReference type="Antibodypedia" id="30751">
    <property type="antibodies" value="121 antibodies from 20 providers"/>
</dbReference>
<dbReference type="Ensembl" id="ENSMUST00000014614.4">
    <property type="protein sequence ID" value="ENSMUSP00000014614.4"/>
    <property type="gene ID" value="ENSMUSG00000014470.5"/>
</dbReference>
<dbReference type="GeneID" id="68718"/>
<dbReference type="KEGG" id="mmu:68718"/>
<dbReference type="UCSC" id="uc009nsx.1">
    <property type="organism name" value="mouse"/>
</dbReference>
<dbReference type="AGR" id="MGI:1915968"/>
<dbReference type="CTD" id="115992"/>
<dbReference type="MGI" id="MGI:1915968">
    <property type="gene designation" value="Rnf166"/>
</dbReference>
<dbReference type="VEuPathDB" id="HostDB:ENSMUSG00000014470"/>
<dbReference type="eggNOG" id="ENOG502RB47">
    <property type="taxonomic scope" value="Eukaryota"/>
</dbReference>
<dbReference type="GeneTree" id="ENSGT00950000182909"/>
<dbReference type="HOGENOM" id="CLU_092448_1_0_1"/>
<dbReference type="InParanoid" id="Q3U9F6"/>
<dbReference type="OMA" id="AHTFCGD"/>
<dbReference type="OrthoDB" id="6270329at2759"/>
<dbReference type="PhylomeDB" id="Q3U9F6"/>
<dbReference type="TreeFam" id="TF331012"/>
<dbReference type="UniPathway" id="UPA00143"/>
<dbReference type="BioGRID-ORCS" id="68718">
    <property type="hits" value="1 hit in 79 CRISPR screens"/>
</dbReference>
<dbReference type="ChiTaRS" id="Rnf166">
    <property type="organism name" value="mouse"/>
</dbReference>
<dbReference type="PRO" id="PR:Q3U9F6"/>
<dbReference type="Proteomes" id="UP000000589">
    <property type="component" value="Chromosome 8"/>
</dbReference>
<dbReference type="RNAct" id="Q3U9F6">
    <property type="molecule type" value="protein"/>
</dbReference>
<dbReference type="Bgee" id="ENSMUSG00000014470">
    <property type="expression patterns" value="Expressed in granulocyte and 267 other cell types or tissues"/>
</dbReference>
<dbReference type="ExpressionAtlas" id="Q3U9F6">
    <property type="expression patterns" value="baseline and differential"/>
</dbReference>
<dbReference type="GO" id="GO:0005737">
    <property type="term" value="C:cytoplasm"/>
    <property type="evidence" value="ECO:0007669"/>
    <property type="project" value="UniProtKB-SubCell"/>
</dbReference>
<dbReference type="GO" id="GO:0016740">
    <property type="term" value="F:transferase activity"/>
    <property type="evidence" value="ECO:0007669"/>
    <property type="project" value="UniProtKB-KW"/>
</dbReference>
<dbReference type="GO" id="GO:0008270">
    <property type="term" value="F:zinc ion binding"/>
    <property type="evidence" value="ECO:0007669"/>
    <property type="project" value="UniProtKB-KW"/>
</dbReference>
<dbReference type="GO" id="GO:0006914">
    <property type="term" value="P:autophagy"/>
    <property type="evidence" value="ECO:0007669"/>
    <property type="project" value="UniProtKB-KW"/>
</dbReference>
<dbReference type="GO" id="GO:0045087">
    <property type="term" value="P:innate immune response"/>
    <property type="evidence" value="ECO:0007669"/>
    <property type="project" value="UniProtKB-KW"/>
</dbReference>
<dbReference type="GO" id="GO:0016567">
    <property type="term" value="P:protein ubiquitination"/>
    <property type="evidence" value="ECO:0007669"/>
    <property type="project" value="UniProtKB-UniPathway"/>
</dbReference>
<dbReference type="CDD" id="cd16549">
    <property type="entry name" value="RING-HC_RNF166"/>
    <property type="match status" value="1"/>
</dbReference>
<dbReference type="Gene3D" id="3.30.40.10">
    <property type="entry name" value="Zinc/RING finger domain, C3HC4 (zinc finger)"/>
    <property type="match status" value="1"/>
</dbReference>
<dbReference type="InterPro" id="IPR008598">
    <property type="entry name" value="Di19_Zn-bd"/>
</dbReference>
<dbReference type="InterPro" id="IPR051438">
    <property type="entry name" value="RNF_E3_ubiq-protein_ligase"/>
</dbReference>
<dbReference type="InterPro" id="IPR034734">
    <property type="entry name" value="ZF_C2HC_RNF"/>
</dbReference>
<dbReference type="InterPro" id="IPR027370">
    <property type="entry name" value="Znf-RING_euk"/>
</dbReference>
<dbReference type="InterPro" id="IPR001841">
    <property type="entry name" value="Znf_RING"/>
</dbReference>
<dbReference type="InterPro" id="IPR013083">
    <property type="entry name" value="Znf_RING/FYVE/PHD"/>
</dbReference>
<dbReference type="InterPro" id="IPR017907">
    <property type="entry name" value="Znf_RING_CS"/>
</dbReference>
<dbReference type="PANTHER" id="PTHR46016:SF4">
    <property type="entry name" value="E3 UBIQUITIN-PROTEIN LIGASE RNF166"/>
    <property type="match status" value="1"/>
</dbReference>
<dbReference type="PANTHER" id="PTHR46016">
    <property type="entry name" value="ZINC FINGER, RING/FYVE/PHD-TYPE"/>
    <property type="match status" value="1"/>
</dbReference>
<dbReference type="Pfam" id="PF05605">
    <property type="entry name" value="zf-Di19"/>
    <property type="match status" value="1"/>
</dbReference>
<dbReference type="Pfam" id="PF13445">
    <property type="entry name" value="zf-RING_UBOX"/>
    <property type="match status" value="1"/>
</dbReference>
<dbReference type="Pfam" id="PF18574">
    <property type="entry name" value="zf_C2HC_14"/>
    <property type="match status" value="1"/>
</dbReference>
<dbReference type="SMART" id="SM00184">
    <property type="entry name" value="RING"/>
    <property type="match status" value="1"/>
</dbReference>
<dbReference type="SUPFAM" id="SSF57850">
    <property type="entry name" value="RING/U-box"/>
    <property type="match status" value="1"/>
</dbReference>
<dbReference type="PROSITE" id="PS51803">
    <property type="entry name" value="ZF_C2HC_RNF"/>
    <property type="match status" value="1"/>
</dbReference>
<dbReference type="PROSITE" id="PS00518">
    <property type="entry name" value="ZF_RING_1"/>
    <property type="match status" value="1"/>
</dbReference>
<dbReference type="PROSITE" id="PS50089">
    <property type="entry name" value="ZF_RING_2"/>
    <property type="match status" value="1"/>
</dbReference>
<comment type="function">
    <text evidence="1">E3 ubiquitin-protein ligase that promotes the ubiquitination of different substrates. In turn, participates in different biological processes including interferon production or autophagy. Plays a role in the activation of RNA virus-induced interferon-beta production by promoting the ubiquitination of TRAF3 and TRAF6. Also plays a role in the early recruitment of autophagy adapters to bacteria. Mediates 'Lys-29' and 'Lys-33'-linked ubiquitination of SQSTM1 leading to xenophagic targeting of bacteria and inhibition of their replication.</text>
</comment>
<comment type="catalytic activity">
    <reaction evidence="1">
        <text>S-ubiquitinyl-[E2 ubiquitin-conjugating enzyme]-L-cysteine + [acceptor protein]-L-lysine = [E2 ubiquitin-conjugating enzyme]-L-cysteine + N(6)-ubiquitinyl-[acceptor protein]-L-lysine.</text>
        <dbReference type="EC" id="2.3.2.27"/>
    </reaction>
</comment>
<comment type="pathway">
    <text evidence="1">Protein modification; protein ubiquitination.</text>
</comment>
<comment type="subcellular location">
    <subcellularLocation>
        <location evidence="1">Cytoplasm</location>
    </subcellularLocation>
</comment>
<name>RN166_MOUSE</name>
<evidence type="ECO:0000250" key="1">
    <source>
        <dbReference type="UniProtKB" id="Q96A37"/>
    </source>
</evidence>
<evidence type="ECO:0000255" key="2">
    <source>
        <dbReference type="PROSITE-ProRule" id="PRU00175"/>
    </source>
</evidence>
<evidence type="ECO:0000255" key="3">
    <source>
        <dbReference type="PROSITE-ProRule" id="PRU01144"/>
    </source>
</evidence>
<evidence type="ECO:0000305" key="4"/>
<reference key="1">
    <citation type="journal article" date="2005" name="Science">
        <title>The transcriptional landscape of the mammalian genome.</title>
        <authorList>
            <person name="Carninci P."/>
            <person name="Kasukawa T."/>
            <person name="Katayama S."/>
            <person name="Gough J."/>
            <person name="Frith M.C."/>
            <person name="Maeda N."/>
            <person name="Oyama R."/>
            <person name="Ravasi T."/>
            <person name="Lenhard B."/>
            <person name="Wells C."/>
            <person name="Kodzius R."/>
            <person name="Shimokawa K."/>
            <person name="Bajic V.B."/>
            <person name="Brenner S.E."/>
            <person name="Batalov S."/>
            <person name="Forrest A.R."/>
            <person name="Zavolan M."/>
            <person name="Davis M.J."/>
            <person name="Wilming L.G."/>
            <person name="Aidinis V."/>
            <person name="Allen J.E."/>
            <person name="Ambesi-Impiombato A."/>
            <person name="Apweiler R."/>
            <person name="Aturaliya R.N."/>
            <person name="Bailey T.L."/>
            <person name="Bansal M."/>
            <person name="Baxter L."/>
            <person name="Beisel K.W."/>
            <person name="Bersano T."/>
            <person name="Bono H."/>
            <person name="Chalk A.M."/>
            <person name="Chiu K.P."/>
            <person name="Choudhary V."/>
            <person name="Christoffels A."/>
            <person name="Clutterbuck D.R."/>
            <person name="Crowe M.L."/>
            <person name="Dalla E."/>
            <person name="Dalrymple B.P."/>
            <person name="de Bono B."/>
            <person name="Della Gatta G."/>
            <person name="di Bernardo D."/>
            <person name="Down T."/>
            <person name="Engstrom P."/>
            <person name="Fagiolini M."/>
            <person name="Faulkner G."/>
            <person name="Fletcher C.F."/>
            <person name="Fukushima T."/>
            <person name="Furuno M."/>
            <person name="Futaki S."/>
            <person name="Gariboldi M."/>
            <person name="Georgii-Hemming P."/>
            <person name="Gingeras T.R."/>
            <person name="Gojobori T."/>
            <person name="Green R.E."/>
            <person name="Gustincich S."/>
            <person name="Harbers M."/>
            <person name="Hayashi Y."/>
            <person name="Hensch T.K."/>
            <person name="Hirokawa N."/>
            <person name="Hill D."/>
            <person name="Huminiecki L."/>
            <person name="Iacono M."/>
            <person name="Ikeo K."/>
            <person name="Iwama A."/>
            <person name="Ishikawa T."/>
            <person name="Jakt M."/>
            <person name="Kanapin A."/>
            <person name="Katoh M."/>
            <person name="Kawasawa Y."/>
            <person name="Kelso J."/>
            <person name="Kitamura H."/>
            <person name="Kitano H."/>
            <person name="Kollias G."/>
            <person name="Krishnan S.P."/>
            <person name="Kruger A."/>
            <person name="Kummerfeld S.K."/>
            <person name="Kurochkin I.V."/>
            <person name="Lareau L.F."/>
            <person name="Lazarevic D."/>
            <person name="Lipovich L."/>
            <person name="Liu J."/>
            <person name="Liuni S."/>
            <person name="McWilliam S."/>
            <person name="Madan Babu M."/>
            <person name="Madera M."/>
            <person name="Marchionni L."/>
            <person name="Matsuda H."/>
            <person name="Matsuzawa S."/>
            <person name="Miki H."/>
            <person name="Mignone F."/>
            <person name="Miyake S."/>
            <person name="Morris K."/>
            <person name="Mottagui-Tabar S."/>
            <person name="Mulder N."/>
            <person name="Nakano N."/>
            <person name="Nakauchi H."/>
            <person name="Ng P."/>
            <person name="Nilsson R."/>
            <person name="Nishiguchi S."/>
            <person name="Nishikawa S."/>
            <person name="Nori F."/>
            <person name="Ohara O."/>
            <person name="Okazaki Y."/>
            <person name="Orlando V."/>
            <person name="Pang K.C."/>
            <person name="Pavan W.J."/>
            <person name="Pavesi G."/>
            <person name="Pesole G."/>
            <person name="Petrovsky N."/>
            <person name="Piazza S."/>
            <person name="Reed J."/>
            <person name="Reid J.F."/>
            <person name="Ring B.Z."/>
            <person name="Ringwald M."/>
            <person name="Rost B."/>
            <person name="Ruan Y."/>
            <person name="Salzberg S.L."/>
            <person name="Sandelin A."/>
            <person name="Schneider C."/>
            <person name="Schoenbach C."/>
            <person name="Sekiguchi K."/>
            <person name="Semple C.A."/>
            <person name="Seno S."/>
            <person name="Sessa L."/>
            <person name="Sheng Y."/>
            <person name="Shibata Y."/>
            <person name="Shimada H."/>
            <person name="Shimada K."/>
            <person name="Silva D."/>
            <person name="Sinclair B."/>
            <person name="Sperling S."/>
            <person name="Stupka E."/>
            <person name="Sugiura K."/>
            <person name="Sultana R."/>
            <person name="Takenaka Y."/>
            <person name="Taki K."/>
            <person name="Tammoja K."/>
            <person name="Tan S.L."/>
            <person name="Tang S."/>
            <person name="Taylor M.S."/>
            <person name="Tegner J."/>
            <person name="Teichmann S.A."/>
            <person name="Ueda H.R."/>
            <person name="van Nimwegen E."/>
            <person name="Verardo R."/>
            <person name="Wei C.L."/>
            <person name="Yagi K."/>
            <person name="Yamanishi H."/>
            <person name="Zabarovsky E."/>
            <person name="Zhu S."/>
            <person name="Zimmer A."/>
            <person name="Hide W."/>
            <person name="Bult C."/>
            <person name="Grimmond S.M."/>
            <person name="Teasdale R.D."/>
            <person name="Liu E.T."/>
            <person name="Brusic V."/>
            <person name="Quackenbush J."/>
            <person name="Wahlestedt C."/>
            <person name="Mattick J.S."/>
            <person name="Hume D.A."/>
            <person name="Kai C."/>
            <person name="Sasaki D."/>
            <person name="Tomaru Y."/>
            <person name="Fukuda S."/>
            <person name="Kanamori-Katayama M."/>
            <person name="Suzuki M."/>
            <person name="Aoki J."/>
            <person name="Arakawa T."/>
            <person name="Iida J."/>
            <person name="Imamura K."/>
            <person name="Itoh M."/>
            <person name="Kato T."/>
            <person name="Kawaji H."/>
            <person name="Kawagashira N."/>
            <person name="Kawashima T."/>
            <person name="Kojima M."/>
            <person name="Kondo S."/>
            <person name="Konno H."/>
            <person name="Nakano K."/>
            <person name="Ninomiya N."/>
            <person name="Nishio T."/>
            <person name="Okada M."/>
            <person name="Plessy C."/>
            <person name="Shibata K."/>
            <person name="Shiraki T."/>
            <person name="Suzuki S."/>
            <person name="Tagami M."/>
            <person name="Waki K."/>
            <person name="Watahiki A."/>
            <person name="Okamura-Oho Y."/>
            <person name="Suzuki H."/>
            <person name="Kawai J."/>
            <person name="Hayashizaki Y."/>
        </authorList>
    </citation>
    <scope>NUCLEOTIDE SEQUENCE [LARGE SCALE MRNA]</scope>
    <source>
        <strain>C57BL/6J</strain>
        <tissue>Bone marrow</tissue>
    </source>
</reference>
<keyword id="KW-0072">Autophagy</keyword>
<keyword id="KW-0963">Cytoplasm</keyword>
<keyword id="KW-0391">Immunity</keyword>
<keyword id="KW-0399">Innate immunity</keyword>
<keyword id="KW-0479">Metal-binding</keyword>
<keyword id="KW-1185">Reference proteome</keyword>
<keyword id="KW-0808">Transferase</keyword>
<keyword id="KW-0833">Ubl conjugation pathway</keyword>
<keyword id="KW-0862">Zinc</keyword>
<keyword id="KW-0863">Zinc-finger</keyword>
<sequence>MAMFRSLVASAQQRQPPAGPAGGDSGLEAQFSCPICLEVYHRPVAIGSCGHTFCGECLQPCLQVPSPLCPLCRLPFDPKKVDKATHVEKQLSSYKAPCRGCNKKVTLAKMRAHISSCLKVQEQMANCPKFVPVVPTSQPIPSNIPNRSTFACPYCGARNLDQQELVKHCVESHRSDPNRVVCPICSAMPWGDPSYKSANFLQHLLHRHKFSYDTFVDYSIDEEAAFQAALALSLSEN</sequence>
<protein>
    <recommendedName>
        <fullName>E3 ubiquitin-protein ligase RNF166</fullName>
        <ecNumber>2.3.2.27</ecNumber>
    </recommendedName>
    <alternativeName>
        <fullName>RING finger protein 166</fullName>
    </alternativeName>
    <alternativeName>
        <fullName>RING-type E3 ubiquitin transferase RNF166</fullName>
    </alternativeName>
</protein>
<feature type="chain" id="PRO_0000245589" description="E3 ubiquitin-protein ligase RNF166">
    <location>
        <begin position="1"/>
        <end position="237"/>
    </location>
</feature>
<feature type="domain" description="UIM" evidence="4">
    <location>
        <begin position="221"/>
        <end position="237"/>
    </location>
</feature>
<feature type="zinc finger region" description="RING-type" evidence="2">
    <location>
        <begin position="33"/>
        <end position="73"/>
    </location>
</feature>
<feature type="zinc finger region" description="C2HC RNF-type" evidence="3">
    <location>
        <begin position="98"/>
        <end position="117"/>
    </location>
</feature>
<feature type="binding site" evidence="3">
    <location>
        <position position="98"/>
    </location>
    <ligand>
        <name>Zn(2+)</name>
        <dbReference type="ChEBI" id="CHEBI:29105"/>
    </ligand>
</feature>
<feature type="binding site" evidence="3">
    <location>
        <position position="101"/>
    </location>
    <ligand>
        <name>Zn(2+)</name>
        <dbReference type="ChEBI" id="CHEBI:29105"/>
    </ligand>
</feature>
<feature type="binding site" evidence="3">
    <location>
        <position position="113"/>
    </location>
    <ligand>
        <name>Zn(2+)</name>
        <dbReference type="ChEBI" id="CHEBI:29105"/>
    </ligand>
</feature>
<feature type="binding site" evidence="3">
    <location>
        <position position="117"/>
    </location>
    <ligand>
        <name>Zn(2+)</name>
        <dbReference type="ChEBI" id="CHEBI:29105"/>
    </ligand>
</feature>
<organism>
    <name type="scientific">Mus musculus</name>
    <name type="common">Mouse</name>
    <dbReference type="NCBI Taxonomy" id="10090"/>
    <lineage>
        <taxon>Eukaryota</taxon>
        <taxon>Metazoa</taxon>
        <taxon>Chordata</taxon>
        <taxon>Craniata</taxon>
        <taxon>Vertebrata</taxon>
        <taxon>Euteleostomi</taxon>
        <taxon>Mammalia</taxon>
        <taxon>Eutheria</taxon>
        <taxon>Euarchontoglires</taxon>
        <taxon>Glires</taxon>
        <taxon>Rodentia</taxon>
        <taxon>Myomorpha</taxon>
        <taxon>Muroidea</taxon>
        <taxon>Muridae</taxon>
        <taxon>Murinae</taxon>
        <taxon>Mus</taxon>
        <taxon>Mus</taxon>
    </lineage>
</organism>
<gene>
    <name type="primary">Rnf166</name>
</gene>